<feature type="chain" id="PRO_1000051185" description="Small ribosomal subunit protein uS9">
    <location>
        <begin position="1"/>
        <end position="130"/>
    </location>
</feature>
<keyword id="KW-1185">Reference proteome</keyword>
<keyword id="KW-0687">Ribonucleoprotein</keyword>
<keyword id="KW-0689">Ribosomal protein</keyword>
<comment type="similarity">
    <text evidence="1">Belongs to the universal ribosomal protein uS9 family.</text>
</comment>
<gene>
    <name evidence="1" type="primary">rpsI</name>
    <name type="ordered locus">BMA2342</name>
</gene>
<name>RS9_BURMA</name>
<reference key="1">
    <citation type="journal article" date="2004" name="Proc. Natl. Acad. Sci. U.S.A.">
        <title>Structural flexibility in the Burkholderia mallei genome.</title>
        <authorList>
            <person name="Nierman W.C."/>
            <person name="DeShazer D."/>
            <person name="Kim H.S."/>
            <person name="Tettelin H."/>
            <person name="Nelson K.E."/>
            <person name="Feldblyum T.V."/>
            <person name="Ulrich R.L."/>
            <person name="Ronning C.M."/>
            <person name="Brinkac L.M."/>
            <person name="Daugherty S.C."/>
            <person name="Davidsen T.D."/>
            <person name="DeBoy R.T."/>
            <person name="Dimitrov G."/>
            <person name="Dodson R.J."/>
            <person name="Durkin A.S."/>
            <person name="Gwinn M.L."/>
            <person name="Haft D.H."/>
            <person name="Khouri H.M."/>
            <person name="Kolonay J.F."/>
            <person name="Madupu R."/>
            <person name="Mohammoud Y."/>
            <person name="Nelson W.C."/>
            <person name="Radune D."/>
            <person name="Romero C.M."/>
            <person name="Sarria S."/>
            <person name="Selengut J."/>
            <person name="Shamblin C."/>
            <person name="Sullivan S.A."/>
            <person name="White O."/>
            <person name="Yu Y."/>
            <person name="Zafar N."/>
            <person name="Zhou L."/>
            <person name="Fraser C.M."/>
        </authorList>
    </citation>
    <scope>NUCLEOTIDE SEQUENCE [LARGE SCALE GENOMIC DNA]</scope>
    <source>
        <strain>ATCC 23344</strain>
    </source>
</reference>
<accession>Q62HB9</accession>
<evidence type="ECO:0000255" key="1">
    <source>
        <dbReference type="HAMAP-Rule" id="MF_00532"/>
    </source>
</evidence>
<evidence type="ECO:0000305" key="2"/>
<sequence length="130" mass="14297">MIGNWNYGTGRRKSAVARVFIKAGKGDIVVNGKPISDYFSRETSLMIVRQPLELTNHAQTFDIKVNVSGGGETGQAGAVRHGITRALIDYDATLKPALSNAGFVTRDAREVERKKVGLHKARRAKQFSKR</sequence>
<proteinExistence type="inferred from homology"/>
<organism>
    <name type="scientific">Burkholderia mallei (strain ATCC 23344)</name>
    <dbReference type="NCBI Taxonomy" id="243160"/>
    <lineage>
        <taxon>Bacteria</taxon>
        <taxon>Pseudomonadati</taxon>
        <taxon>Pseudomonadota</taxon>
        <taxon>Betaproteobacteria</taxon>
        <taxon>Burkholderiales</taxon>
        <taxon>Burkholderiaceae</taxon>
        <taxon>Burkholderia</taxon>
        <taxon>pseudomallei group</taxon>
    </lineage>
</organism>
<protein>
    <recommendedName>
        <fullName evidence="1">Small ribosomal subunit protein uS9</fullName>
    </recommendedName>
    <alternativeName>
        <fullName evidence="2">30S ribosomal protein S9</fullName>
    </alternativeName>
</protein>
<dbReference type="EMBL" id="CP000010">
    <property type="protein sequence ID" value="AAU50226.1"/>
    <property type="molecule type" value="Genomic_DNA"/>
</dbReference>
<dbReference type="RefSeq" id="WP_004194309.1">
    <property type="nucleotide sequence ID" value="NC_006348.1"/>
</dbReference>
<dbReference type="RefSeq" id="YP_103901.1">
    <property type="nucleotide sequence ID" value="NC_006348.1"/>
</dbReference>
<dbReference type="SMR" id="Q62HB9"/>
<dbReference type="GeneID" id="93061506"/>
<dbReference type="KEGG" id="bma:BMA2342"/>
<dbReference type="PATRIC" id="fig|243160.12.peg.2412"/>
<dbReference type="eggNOG" id="COG0103">
    <property type="taxonomic scope" value="Bacteria"/>
</dbReference>
<dbReference type="HOGENOM" id="CLU_046483_2_1_4"/>
<dbReference type="Proteomes" id="UP000006693">
    <property type="component" value="Chromosome 1"/>
</dbReference>
<dbReference type="GO" id="GO:0022627">
    <property type="term" value="C:cytosolic small ribosomal subunit"/>
    <property type="evidence" value="ECO:0007669"/>
    <property type="project" value="TreeGrafter"/>
</dbReference>
<dbReference type="GO" id="GO:0003723">
    <property type="term" value="F:RNA binding"/>
    <property type="evidence" value="ECO:0007669"/>
    <property type="project" value="TreeGrafter"/>
</dbReference>
<dbReference type="GO" id="GO:0003735">
    <property type="term" value="F:structural constituent of ribosome"/>
    <property type="evidence" value="ECO:0007669"/>
    <property type="project" value="InterPro"/>
</dbReference>
<dbReference type="GO" id="GO:0006412">
    <property type="term" value="P:translation"/>
    <property type="evidence" value="ECO:0007669"/>
    <property type="project" value="UniProtKB-UniRule"/>
</dbReference>
<dbReference type="FunFam" id="3.30.230.10:FF:000001">
    <property type="entry name" value="30S ribosomal protein S9"/>
    <property type="match status" value="1"/>
</dbReference>
<dbReference type="Gene3D" id="3.30.230.10">
    <property type="match status" value="1"/>
</dbReference>
<dbReference type="HAMAP" id="MF_00532_B">
    <property type="entry name" value="Ribosomal_uS9_B"/>
    <property type="match status" value="1"/>
</dbReference>
<dbReference type="InterPro" id="IPR020568">
    <property type="entry name" value="Ribosomal_Su5_D2-typ_SF"/>
</dbReference>
<dbReference type="InterPro" id="IPR000754">
    <property type="entry name" value="Ribosomal_uS9"/>
</dbReference>
<dbReference type="InterPro" id="IPR023035">
    <property type="entry name" value="Ribosomal_uS9_bac/plastid"/>
</dbReference>
<dbReference type="InterPro" id="IPR020574">
    <property type="entry name" value="Ribosomal_uS9_CS"/>
</dbReference>
<dbReference type="InterPro" id="IPR014721">
    <property type="entry name" value="Ribsml_uS5_D2-typ_fold_subgr"/>
</dbReference>
<dbReference type="NCBIfam" id="NF001099">
    <property type="entry name" value="PRK00132.1"/>
    <property type="match status" value="1"/>
</dbReference>
<dbReference type="PANTHER" id="PTHR21569">
    <property type="entry name" value="RIBOSOMAL PROTEIN S9"/>
    <property type="match status" value="1"/>
</dbReference>
<dbReference type="PANTHER" id="PTHR21569:SF1">
    <property type="entry name" value="SMALL RIBOSOMAL SUBUNIT PROTEIN US9M"/>
    <property type="match status" value="1"/>
</dbReference>
<dbReference type="Pfam" id="PF00380">
    <property type="entry name" value="Ribosomal_S9"/>
    <property type="match status" value="1"/>
</dbReference>
<dbReference type="SUPFAM" id="SSF54211">
    <property type="entry name" value="Ribosomal protein S5 domain 2-like"/>
    <property type="match status" value="1"/>
</dbReference>
<dbReference type="PROSITE" id="PS00360">
    <property type="entry name" value="RIBOSOMAL_S9"/>
    <property type="match status" value="1"/>
</dbReference>